<keyword id="KW-0320">Glycogen biosynthesis</keyword>
<keyword id="KW-0328">Glycosyltransferase</keyword>
<keyword id="KW-0808">Transferase</keyword>
<accession>Q57IU1</accession>
<feature type="chain" id="PRO_0000230261" description="Glycogen synthase">
    <location>
        <begin position="1"/>
        <end position="477"/>
    </location>
</feature>
<feature type="binding site" evidence="1">
    <location>
        <position position="15"/>
    </location>
    <ligand>
        <name>ADP-alpha-D-glucose</name>
        <dbReference type="ChEBI" id="CHEBI:57498"/>
    </ligand>
</feature>
<gene>
    <name evidence="1" type="primary">glgA</name>
    <name type="ordered locus">SCH_3465</name>
</gene>
<sequence>MQVLHVCSEMFPLLKTGGLADVIGALPAAQIADGVDVRVLLPGFPDIRRGIPDAHVVSRRDTFAGKISLLFGHYNGVGIYLIDAPHLYERPGSPYHDTNLYAYTDNVLRFALLGWVGCEMACGLDPFWRPDVVHAHDWHAGLAPAYLAARGRPAKSVFTVHNLAYQGMFYAKHMDDIELPWSFFNMHGLEFNGQLSFLKAGLYYADHITAVSPTYAREITEPQFAYGMEGLLRQRHLEGRLSGILNGVDEKIWNPESDLLLASRYKRDTLEEKAENKRQLQIAMGLKVNDKVPLFAVVSRLTNQKGLDLVLEALPGLLEQGGQLALLGAGDPVLQEGFLAAAAEHPGQVGVQIGYHEAFSHRIMGGADVILVPSRFEPCGLTQLYGLKYGTLPLVRRTGGLADTVSDSSLENLADGIASGFVFEDSNAWSLLRAIRRAFVLWSRPSLWRFVQRQAMAMDFSWQVAAKSYRELYYRLK</sequence>
<dbReference type="EC" id="2.4.1.21" evidence="1"/>
<dbReference type="EMBL" id="AE017220">
    <property type="protein sequence ID" value="AAX67371.1"/>
    <property type="molecule type" value="Genomic_DNA"/>
</dbReference>
<dbReference type="RefSeq" id="WP_001197666.1">
    <property type="nucleotide sequence ID" value="NC_006905.1"/>
</dbReference>
<dbReference type="SMR" id="Q57IU1"/>
<dbReference type="CAZy" id="GT5">
    <property type="family name" value="Glycosyltransferase Family 5"/>
</dbReference>
<dbReference type="KEGG" id="sec:SCH_3465"/>
<dbReference type="HOGENOM" id="CLU_009583_18_4_6"/>
<dbReference type="UniPathway" id="UPA00164"/>
<dbReference type="Proteomes" id="UP000000538">
    <property type="component" value="Chromosome"/>
</dbReference>
<dbReference type="GO" id="GO:0005829">
    <property type="term" value="C:cytosol"/>
    <property type="evidence" value="ECO:0007669"/>
    <property type="project" value="TreeGrafter"/>
</dbReference>
<dbReference type="GO" id="GO:0009011">
    <property type="term" value="F:alpha-1,4-glucan glucosyltransferase (ADP-glucose donor) activity"/>
    <property type="evidence" value="ECO:0007669"/>
    <property type="project" value="UniProtKB-UniRule"/>
</dbReference>
<dbReference type="GO" id="GO:0004373">
    <property type="term" value="F:alpha-1,4-glucan glucosyltransferase (UDP-glucose donor) activity"/>
    <property type="evidence" value="ECO:0007669"/>
    <property type="project" value="InterPro"/>
</dbReference>
<dbReference type="GO" id="GO:0005978">
    <property type="term" value="P:glycogen biosynthetic process"/>
    <property type="evidence" value="ECO:0007669"/>
    <property type="project" value="UniProtKB-UniRule"/>
</dbReference>
<dbReference type="CDD" id="cd03791">
    <property type="entry name" value="GT5_Glycogen_synthase_DULL1-like"/>
    <property type="match status" value="1"/>
</dbReference>
<dbReference type="FunFam" id="3.40.50.2000:FF:000011">
    <property type="entry name" value="Glycogen synthase"/>
    <property type="match status" value="1"/>
</dbReference>
<dbReference type="Gene3D" id="3.40.50.2000">
    <property type="entry name" value="Glycogen Phosphorylase B"/>
    <property type="match status" value="2"/>
</dbReference>
<dbReference type="HAMAP" id="MF_00484">
    <property type="entry name" value="Glycogen_synth"/>
    <property type="match status" value="1"/>
</dbReference>
<dbReference type="InterPro" id="IPR001296">
    <property type="entry name" value="Glyco_trans_1"/>
</dbReference>
<dbReference type="InterPro" id="IPR011835">
    <property type="entry name" value="GS/SS"/>
</dbReference>
<dbReference type="InterPro" id="IPR013534">
    <property type="entry name" value="Starch_synth_cat_dom"/>
</dbReference>
<dbReference type="NCBIfam" id="TIGR02095">
    <property type="entry name" value="glgA"/>
    <property type="match status" value="1"/>
</dbReference>
<dbReference type="NCBIfam" id="NF001899">
    <property type="entry name" value="PRK00654.1-2"/>
    <property type="match status" value="1"/>
</dbReference>
<dbReference type="PANTHER" id="PTHR45825:SF11">
    <property type="entry name" value="ALPHA AMYLASE DOMAIN-CONTAINING PROTEIN"/>
    <property type="match status" value="1"/>
</dbReference>
<dbReference type="PANTHER" id="PTHR45825">
    <property type="entry name" value="GRANULE-BOUND STARCH SYNTHASE 1, CHLOROPLASTIC/AMYLOPLASTIC"/>
    <property type="match status" value="1"/>
</dbReference>
<dbReference type="Pfam" id="PF08323">
    <property type="entry name" value="Glyco_transf_5"/>
    <property type="match status" value="1"/>
</dbReference>
<dbReference type="Pfam" id="PF00534">
    <property type="entry name" value="Glycos_transf_1"/>
    <property type="match status" value="1"/>
</dbReference>
<dbReference type="SUPFAM" id="SSF53756">
    <property type="entry name" value="UDP-Glycosyltransferase/glycogen phosphorylase"/>
    <property type="match status" value="1"/>
</dbReference>
<name>GLGA_SALCH</name>
<protein>
    <recommendedName>
        <fullName evidence="1">Glycogen synthase</fullName>
        <ecNumber evidence="1">2.4.1.21</ecNumber>
    </recommendedName>
    <alternativeName>
        <fullName evidence="1">Starch [bacterial glycogen] synthase</fullName>
    </alternativeName>
</protein>
<organism>
    <name type="scientific">Salmonella choleraesuis (strain SC-B67)</name>
    <dbReference type="NCBI Taxonomy" id="321314"/>
    <lineage>
        <taxon>Bacteria</taxon>
        <taxon>Pseudomonadati</taxon>
        <taxon>Pseudomonadota</taxon>
        <taxon>Gammaproteobacteria</taxon>
        <taxon>Enterobacterales</taxon>
        <taxon>Enterobacteriaceae</taxon>
        <taxon>Salmonella</taxon>
    </lineage>
</organism>
<evidence type="ECO:0000255" key="1">
    <source>
        <dbReference type="HAMAP-Rule" id="MF_00484"/>
    </source>
</evidence>
<proteinExistence type="inferred from homology"/>
<reference key="1">
    <citation type="journal article" date="2005" name="Nucleic Acids Res.">
        <title>The genome sequence of Salmonella enterica serovar Choleraesuis, a highly invasive and resistant zoonotic pathogen.</title>
        <authorList>
            <person name="Chiu C.-H."/>
            <person name="Tang P."/>
            <person name="Chu C."/>
            <person name="Hu S."/>
            <person name="Bao Q."/>
            <person name="Yu J."/>
            <person name="Chou Y.-Y."/>
            <person name="Wang H.-S."/>
            <person name="Lee Y.-S."/>
        </authorList>
    </citation>
    <scope>NUCLEOTIDE SEQUENCE [LARGE SCALE GENOMIC DNA]</scope>
    <source>
        <strain>SC-B67</strain>
    </source>
</reference>
<comment type="function">
    <text evidence="1">Synthesizes alpha-1,4-glucan chains using ADP-glucose.</text>
</comment>
<comment type="catalytic activity">
    <reaction evidence="1">
        <text>[(1-&gt;4)-alpha-D-glucosyl](n) + ADP-alpha-D-glucose = [(1-&gt;4)-alpha-D-glucosyl](n+1) + ADP + H(+)</text>
        <dbReference type="Rhea" id="RHEA:18189"/>
        <dbReference type="Rhea" id="RHEA-COMP:9584"/>
        <dbReference type="Rhea" id="RHEA-COMP:9587"/>
        <dbReference type="ChEBI" id="CHEBI:15378"/>
        <dbReference type="ChEBI" id="CHEBI:15444"/>
        <dbReference type="ChEBI" id="CHEBI:57498"/>
        <dbReference type="ChEBI" id="CHEBI:456216"/>
        <dbReference type="EC" id="2.4.1.21"/>
    </reaction>
</comment>
<comment type="pathway">
    <text evidence="1">Glycan biosynthesis; glycogen biosynthesis.</text>
</comment>
<comment type="similarity">
    <text evidence="1">Belongs to the glycosyltransferase 1 family. Bacterial/plant glycogen synthase subfamily.</text>
</comment>